<name>ARCH_ICTPU</name>
<evidence type="ECO:0000250" key="1"/>
<evidence type="ECO:0000305" key="2"/>
<sequence length="162" mass="18799">MNDRELDLTEAQKAIKAKYPAINKKYEYLDHTADVQLHSWGDTLEEAFEQCAMAMFGYMTDTETVEPIDTIEIESEGDDLESLLFHFLDDWLFKFSADAFFVPREVKVLQLDRMRFTIRSIGWGEEFNLAKHPQGTEVKAITYSAMQICDKEKPEIFAIIDI</sequence>
<reference key="1">
    <citation type="submission" date="2006-01" db="EMBL/GenBank/DDBJ databases">
        <title>Channel catfish gene expression after Edwardsiella ictaluri infection.</title>
        <authorList>
            <person name="Yeh H.-Y."/>
            <person name="Klesius P.H."/>
        </authorList>
    </citation>
    <scope>NUCLEOTIDE SEQUENCE [MRNA]</scope>
    <source>
        <tissue>Ovary</tissue>
    </source>
</reference>
<keyword id="KW-0106">Calcium</keyword>
<keyword id="KW-0479">Metal-binding</keyword>
<keyword id="KW-0819">tRNA processing</keyword>
<comment type="function">
    <text evidence="1">Component of the tRNA-splicing ligase complex required to facilitate the enzymatic turnover of catalytic subunit RTCB. Together with ddx1, acts by facilitating the guanylylation of RTCB, a key intermediate step in tRNA ligation (By similarity).</text>
</comment>
<comment type="subunit">
    <text evidence="1">Component of the tRNA-splicing ligase complex.</text>
</comment>
<comment type="similarity">
    <text evidence="2">Belongs to the archease family.</text>
</comment>
<feature type="chain" id="PRO_0000285953" description="Protein archease">
    <location>
        <begin position="1"/>
        <end position="162"/>
    </location>
</feature>
<feature type="binding site" evidence="1">
    <location>
        <position position="34"/>
    </location>
    <ligand>
        <name>Ca(2+)</name>
        <dbReference type="ChEBI" id="CHEBI:29108"/>
    </ligand>
</feature>
<feature type="binding site" evidence="1">
    <location>
        <position position="161"/>
    </location>
    <ligand>
        <name>Ca(2+)</name>
        <dbReference type="ChEBI" id="CHEBI:29108"/>
    </ligand>
</feature>
<feature type="binding site" evidence="1">
    <location>
        <position position="162"/>
    </location>
    <ligand>
        <name>Ca(2+)</name>
        <dbReference type="ChEBI" id="CHEBI:29108"/>
    </ligand>
</feature>
<dbReference type="EMBL" id="DQ381261">
    <property type="protein sequence ID" value="ABD38668.1"/>
    <property type="molecule type" value="mRNA"/>
</dbReference>
<dbReference type="RefSeq" id="NP_001187153.1">
    <property type="nucleotide sequence ID" value="NM_001200224.1"/>
</dbReference>
<dbReference type="SMR" id="Q2EGP9"/>
<dbReference type="STRING" id="7998.ENSIPUP00000029176"/>
<dbReference type="GeneID" id="108263438"/>
<dbReference type="KEGG" id="ipu:108263438"/>
<dbReference type="CTD" id="339487"/>
<dbReference type="OrthoDB" id="2190767at2759"/>
<dbReference type="Proteomes" id="UP000221080">
    <property type="component" value="Chromosome 3"/>
</dbReference>
<dbReference type="GO" id="GO:0072669">
    <property type="term" value="C:tRNA-splicing ligase complex"/>
    <property type="evidence" value="ECO:0000250"/>
    <property type="project" value="UniProtKB"/>
</dbReference>
<dbReference type="GO" id="GO:0046872">
    <property type="term" value="F:metal ion binding"/>
    <property type="evidence" value="ECO:0007669"/>
    <property type="project" value="UniProtKB-KW"/>
</dbReference>
<dbReference type="GO" id="GO:0006388">
    <property type="term" value="P:tRNA splicing, via endonucleolytic cleavage and ligation"/>
    <property type="evidence" value="ECO:0000250"/>
    <property type="project" value="UniProtKB"/>
</dbReference>
<dbReference type="FunFam" id="3.55.10.10:FF:000001">
    <property type="entry name" value="protein archease isoform X1"/>
    <property type="match status" value="1"/>
</dbReference>
<dbReference type="Gene3D" id="3.55.10.10">
    <property type="entry name" value="Archease domain"/>
    <property type="match status" value="1"/>
</dbReference>
<dbReference type="InterPro" id="IPR002804">
    <property type="entry name" value="Archease"/>
</dbReference>
<dbReference type="InterPro" id="IPR023572">
    <property type="entry name" value="Archease_dom"/>
</dbReference>
<dbReference type="InterPro" id="IPR036820">
    <property type="entry name" value="Archease_dom_sf"/>
</dbReference>
<dbReference type="PANTHER" id="PTHR12682">
    <property type="entry name" value="ARCHEASE"/>
    <property type="match status" value="1"/>
</dbReference>
<dbReference type="PANTHER" id="PTHR12682:SF11">
    <property type="entry name" value="PROTEIN ARCHEASE"/>
    <property type="match status" value="1"/>
</dbReference>
<dbReference type="Pfam" id="PF01951">
    <property type="entry name" value="Archease"/>
    <property type="match status" value="1"/>
</dbReference>
<dbReference type="SUPFAM" id="SSF69819">
    <property type="entry name" value="MTH1598-like"/>
    <property type="match status" value="1"/>
</dbReference>
<accession>Q2EGP9</accession>
<organism>
    <name type="scientific">Ictalurus punctatus</name>
    <name type="common">Channel catfish</name>
    <name type="synonym">Silurus punctatus</name>
    <dbReference type="NCBI Taxonomy" id="7998"/>
    <lineage>
        <taxon>Eukaryota</taxon>
        <taxon>Metazoa</taxon>
        <taxon>Chordata</taxon>
        <taxon>Craniata</taxon>
        <taxon>Vertebrata</taxon>
        <taxon>Euteleostomi</taxon>
        <taxon>Actinopterygii</taxon>
        <taxon>Neopterygii</taxon>
        <taxon>Teleostei</taxon>
        <taxon>Ostariophysi</taxon>
        <taxon>Siluriformes</taxon>
        <taxon>Ictaluridae</taxon>
        <taxon>Ictalurus</taxon>
    </lineage>
</organism>
<protein>
    <recommendedName>
        <fullName>Protein archease</fullName>
    </recommendedName>
</protein>
<proteinExistence type="evidence at transcript level"/>